<accession>Q7VHX9</accession>
<evidence type="ECO:0000255" key="1">
    <source>
        <dbReference type="HAMAP-Rule" id="MF_01220"/>
    </source>
</evidence>
<name>PYRH_HELHP</name>
<proteinExistence type="inferred from homology"/>
<reference key="1">
    <citation type="journal article" date="2003" name="Proc. Natl. Acad. Sci. U.S.A.">
        <title>The complete genome sequence of the carcinogenic bacterium Helicobacter hepaticus.</title>
        <authorList>
            <person name="Suerbaum S."/>
            <person name="Josenhans C."/>
            <person name="Sterzenbach T."/>
            <person name="Drescher B."/>
            <person name="Brandt P."/>
            <person name="Bell M."/>
            <person name="Droege M."/>
            <person name="Fartmann B."/>
            <person name="Fischer H.-P."/>
            <person name="Ge Z."/>
            <person name="Hoerster A."/>
            <person name="Holland R."/>
            <person name="Klein K."/>
            <person name="Koenig J."/>
            <person name="Macko L."/>
            <person name="Mendz G.L."/>
            <person name="Nyakatura G."/>
            <person name="Schauer D.B."/>
            <person name="Shen Z."/>
            <person name="Weber J."/>
            <person name="Frosch M."/>
            <person name="Fox J.G."/>
        </authorList>
    </citation>
    <scope>NUCLEOTIDE SEQUENCE [LARGE SCALE GENOMIC DNA]</scope>
    <source>
        <strain>ATCC 51449 / 3B1</strain>
    </source>
</reference>
<sequence length="236" mass="25724">MEYKRVLVKFSGEALSGNSGFGIDVKILEYIAGEIKSLVDNQIEVGIVIGGGNIIRGVSAAQGGIIRRTSGDYMGMLATVINAVAMQEALEYLGVDVRVQSALEIKEVCESYIYRRAIRHLEKGRVVVFGAGTGNPFFTTDSAATLRAVEIGADVIIKATKVDGVYDKDPHKFSDAKMLESISYDEALRDHIKVMDDTAIALAKDNKLPILVCNMFREGNLLDLLKYKKGICSIVK</sequence>
<protein>
    <recommendedName>
        <fullName evidence="1">Uridylate kinase</fullName>
        <shortName evidence="1">UK</shortName>
        <ecNumber evidence="1">2.7.4.22</ecNumber>
    </recommendedName>
    <alternativeName>
        <fullName evidence="1">Uridine monophosphate kinase</fullName>
        <shortName evidence="1">UMP kinase</shortName>
        <shortName evidence="1">UMPK</shortName>
    </alternativeName>
</protein>
<gene>
    <name evidence="1" type="primary">pyrH</name>
    <name type="ordered locus">HH_0833</name>
</gene>
<comment type="function">
    <text evidence="1">Catalyzes the reversible phosphorylation of UMP to UDP.</text>
</comment>
<comment type="catalytic activity">
    <reaction evidence="1">
        <text>UMP + ATP = UDP + ADP</text>
        <dbReference type="Rhea" id="RHEA:24400"/>
        <dbReference type="ChEBI" id="CHEBI:30616"/>
        <dbReference type="ChEBI" id="CHEBI:57865"/>
        <dbReference type="ChEBI" id="CHEBI:58223"/>
        <dbReference type="ChEBI" id="CHEBI:456216"/>
        <dbReference type="EC" id="2.7.4.22"/>
    </reaction>
</comment>
<comment type="activity regulation">
    <text evidence="1">Allosterically activated by GTP. Inhibited by UTP.</text>
</comment>
<comment type="pathway">
    <text evidence="1">Pyrimidine metabolism; CTP biosynthesis via de novo pathway; UDP from UMP (UMPK route): step 1/1.</text>
</comment>
<comment type="subunit">
    <text evidence="1">Homohexamer.</text>
</comment>
<comment type="subcellular location">
    <subcellularLocation>
        <location evidence="1">Cytoplasm</location>
    </subcellularLocation>
</comment>
<comment type="similarity">
    <text evidence="1">Belongs to the UMP kinase family.</text>
</comment>
<dbReference type="EC" id="2.7.4.22" evidence="1"/>
<dbReference type="EMBL" id="AE017125">
    <property type="protein sequence ID" value="AAP77430.1"/>
    <property type="molecule type" value="Genomic_DNA"/>
</dbReference>
<dbReference type="RefSeq" id="WP_011115673.1">
    <property type="nucleotide sequence ID" value="NC_004917.1"/>
</dbReference>
<dbReference type="SMR" id="Q7VHX9"/>
<dbReference type="STRING" id="235279.HH_0833"/>
<dbReference type="KEGG" id="hhe:HH_0833"/>
<dbReference type="eggNOG" id="COG0528">
    <property type="taxonomic scope" value="Bacteria"/>
</dbReference>
<dbReference type="HOGENOM" id="CLU_033861_0_0_7"/>
<dbReference type="OrthoDB" id="9807458at2"/>
<dbReference type="UniPathway" id="UPA00159">
    <property type="reaction ID" value="UER00275"/>
</dbReference>
<dbReference type="Proteomes" id="UP000002495">
    <property type="component" value="Chromosome"/>
</dbReference>
<dbReference type="GO" id="GO:0005829">
    <property type="term" value="C:cytosol"/>
    <property type="evidence" value="ECO:0007669"/>
    <property type="project" value="TreeGrafter"/>
</dbReference>
<dbReference type="GO" id="GO:0005524">
    <property type="term" value="F:ATP binding"/>
    <property type="evidence" value="ECO:0007669"/>
    <property type="project" value="UniProtKB-KW"/>
</dbReference>
<dbReference type="GO" id="GO:0033862">
    <property type="term" value="F:UMP kinase activity"/>
    <property type="evidence" value="ECO:0007669"/>
    <property type="project" value="UniProtKB-EC"/>
</dbReference>
<dbReference type="GO" id="GO:0044210">
    <property type="term" value="P:'de novo' CTP biosynthetic process"/>
    <property type="evidence" value="ECO:0007669"/>
    <property type="project" value="UniProtKB-UniRule"/>
</dbReference>
<dbReference type="GO" id="GO:0006225">
    <property type="term" value="P:UDP biosynthetic process"/>
    <property type="evidence" value="ECO:0007669"/>
    <property type="project" value="TreeGrafter"/>
</dbReference>
<dbReference type="CDD" id="cd04254">
    <property type="entry name" value="AAK_UMPK-PyrH-Ec"/>
    <property type="match status" value="1"/>
</dbReference>
<dbReference type="FunFam" id="3.40.1160.10:FF:000001">
    <property type="entry name" value="Uridylate kinase"/>
    <property type="match status" value="1"/>
</dbReference>
<dbReference type="Gene3D" id="3.40.1160.10">
    <property type="entry name" value="Acetylglutamate kinase-like"/>
    <property type="match status" value="1"/>
</dbReference>
<dbReference type="HAMAP" id="MF_01220_B">
    <property type="entry name" value="PyrH_B"/>
    <property type="match status" value="1"/>
</dbReference>
<dbReference type="InterPro" id="IPR036393">
    <property type="entry name" value="AceGlu_kinase-like_sf"/>
</dbReference>
<dbReference type="InterPro" id="IPR001048">
    <property type="entry name" value="Asp/Glu/Uridylate_kinase"/>
</dbReference>
<dbReference type="InterPro" id="IPR011817">
    <property type="entry name" value="Uridylate_kinase"/>
</dbReference>
<dbReference type="InterPro" id="IPR015963">
    <property type="entry name" value="Uridylate_kinase_bac"/>
</dbReference>
<dbReference type="NCBIfam" id="TIGR02075">
    <property type="entry name" value="pyrH_bact"/>
    <property type="match status" value="1"/>
</dbReference>
<dbReference type="PANTHER" id="PTHR42833">
    <property type="entry name" value="URIDYLATE KINASE"/>
    <property type="match status" value="1"/>
</dbReference>
<dbReference type="PANTHER" id="PTHR42833:SF4">
    <property type="entry name" value="URIDYLATE KINASE PUMPKIN, CHLOROPLASTIC"/>
    <property type="match status" value="1"/>
</dbReference>
<dbReference type="Pfam" id="PF00696">
    <property type="entry name" value="AA_kinase"/>
    <property type="match status" value="1"/>
</dbReference>
<dbReference type="PIRSF" id="PIRSF005650">
    <property type="entry name" value="Uridylate_kin"/>
    <property type="match status" value="1"/>
</dbReference>
<dbReference type="SUPFAM" id="SSF53633">
    <property type="entry name" value="Carbamate kinase-like"/>
    <property type="match status" value="1"/>
</dbReference>
<organism>
    <name type="scientific">Helicobacter hepaticus (strain ATCC 51449 / 3B1)</name>
    <dbReference type="NCBI Taxonomy" id="235279"/>
    <lineage>
        <taxon>Bacteria</taxon>
        <taxon>Pseudomonadati</taxon>
        <taxon>Campylobacterota</taxon>
        <taxon>Epsilonproteobacteria</taxon>
        <taxon>Campylobacterales</taxon>
        <taxon>Helicobacteraceae</taxon>
        <taxon>Helicobacter</taxon>
    </lineage>
</organism>
<feature type="chain" id="PRO_0000323863" description="Uridylate kinase">
    <location>
        <begin position="1"/>
        <end position="236"/>
    </location>
</feature>
<feature type="region of interest" description="Involved in allosteric activation by GTP" evidence="1">
    <location>
        <begin position="17"/>
        <end position="22"/>
    </location>
</feature>
<feature type="binding site" evidence="1">
    <location>
        <begin position="9"/>
        <end position="12"/>
    </location>
    <ligand>
        <name>ATP</name>
        <dbReference type="ChEBI" id="CHEBI:30616"/>
    </ligand>
</feature>
<feature type="binding site" evidence="1">
    <location>
        <position position="51"/>
    </location>
    <ligand>
        <name>UMP</name>
        <dbReference type="ChEBI" id="CHEBI:57865"/>
    </ligand>
</feature>
<feature type="binding site" evidence="1">
    <location>
        <position position="52"/>
    </location>
    <ligand>
        <name>ATP</name>
        <dbReference type="ChEBI" id="CHEBI:30616"/>
    </ligand>
</feature>
<feature type="binding site" evidence="1">
    <location>
        <position position="56"/>
    </location>
    <ligand>
        <name>ATP</name>
        <dbReference type="ChEBI" id="CHEBI:30616"/>
    </ligand>
</feature>
<feature type="binding site" evidence="1">
    <location>
        <position position="72"/>
    </location>
    <ligand>
        <name>UMP</name>
        <dbReference type="ChEBI" id="CHEBI:57865"/>
    </ligand>
</feature>
<feature type="binding site" evidence="1">
    <location>
        <begin position="133"/>
        <end position="140"/>
    </location>
    <ligand>
        <name>UMP</name>
        <dbReference type="ChEBI" id="CHEBI:57865"/>
    </ligand>
</feature>
<feature type="binding site" evidence="1">
    <location>
        <position position="160"/>
    </location>
    <ligand>
        <name>ATP</name>
        <dbReference type="ChEBI" id="CHEBI:30616"/>
    </ligand>
</feature>
<feature type="binding site" evidence="1">
    <location>
        <position position="166"/>
    </location>
    <ligand>
        <name>ATP</name>
        <dbReference type="ChEBI" id="CHEBI:30616"/>
    </ligand>
</feature>
<feature type="binding site" evidence="1">
    <location>
        <position position="169"/>
    </location>
    <ligand>
        <name>ATP</name>
        <dbReference type="ChEBI" id="CHEBI:30616"/>
    </ligand>
</feature>
<keyword id="KW-0021">Allosteric enzyme</keyword>
<keyword id="KW-0067">ATP-binding</keyword>
<keyword id="KW-0963">Cytoplasm</keyword>
<keyword id="KW-0418">Kinase</keyword>
<keyword id="KW-0547">Nucleotide-binding</keyword>
<keyword id="KW-0665">Pyrimidine biosynthesis</keyword>
<keyword id="KW-1185">Reference proteome</keyword>
<keyword id="KW-0808">Transferase</keyword>